<accession>B8DWJ5</accession>
<protein>
    <recommendedName>
        <fullName evidence="1">DNA-directed RNA polymerase subunit beta'</fullName>
        <shortName evidence="1">RNAP subunit beta'</shortName>
        <ecNumber evidence="1">2.7.7.6</ecNumber>
    </recommendedName>
    <alternativeName>
        <fullName evidence="1">RNA polymerase subunit beta'</fullName>
    </alternativeName>
    <alternativeName>
        <fullName evidence="1">Transcriptase subunit beta'</fullName>
    </alternativeName>
</protein>
<organism>
    <name type="scientific">Bifidobacterium animalis subsp. lactis (strain AD011)</name>
    <dbReference type="NCBI Taxonomy" id="442563"/>
    <lineage>
        <taxon>Bacteria</taxon>
        <taxon>Bacillati</taxon>
        <taxon>Actinomycetota</taxon>
        <taxon>Actinomycetes</taxon>
        <taxon>Bifidobacteriales</taxon>
        <taxon>Bifidobacteriaceae</taxon>
        <taxon>Bifidobacterium</taxon>
    </lineage>
</organism>
<proteinExistence type="inferred from homology"/>
<dbReference type="EC" id="2.7.7.6" evidence="1"/>
<dbReference type="EMBL" id="CP001213">
    <property type="protein sequence ID" value="ACL28846.1"/>
    <property type="molecule type" value="Genomic_DNA"/>
</dbReference>
<dbReference type="RefSeq" id="WP_004218268.1">
    <property type="nucleotide sequence ID" value="NC_011835.1"/>
</dbReference>
<dbReference type="SMR" id="B8DWJ5"/>
<dbReference type="STRING" id="442563.BLA_0547"/>
<dbReference type="KEGG" id="bla:BLA_0547"/>
<dbReference type="HOGENOM" id="CLU_000524_3_1_11"/>
<dbReference type="Proteomes" id="UP000002456">
    <property type="component" value="Chromosome"/>
</dbReference>
<dbReference type="GO" id="GO:0000428">
    <property type="term" value="C:DNA-directed RNA polymerase complex"/>
    <property type="evidence" value="ECO:0007669"/>
    <property type="project" value="UniProtKB-KW"/>
</dbReference>
<dbReference type="GO" id="GO:0003677">
    <property type="term" value="F:DNA binding"/>
    <property type="evidence" value="ECO:0007669"/>
    <property type="project" value="UniProtKB-UniRule"/>
</dbReference>
<dbReference type="GO" id="GO:0003899">
    <property type="term" value="F:DNA-directed RNA polymerase activity"/>
    <property type="evidence" value="ECO:0007669"/>
    <property type="project" value="UniProtKB-UniRule"/>
</dbReference>
<dbReference type="GO" id="GO:0000287">
    <property type="term" value="F:magnesium ion binding"/>
    <property type="evidence" value="ECO:0007669"/>
    <property type="project" value="UniProtKB-UniRule"/>
</dbReference>
<dbReference type="GO" id="GO:0008270">
    <property type="term" value="F:zinc ion binding"/>
    <property type="evidence" value="ECO:0007669"/>
    <property type="project" value="UniProtKB-UniRule"/>
</dbReference>
<dbReference type="GO" id="GO:0006351">
    <property type="term" value="P:DNA-templated transcription"/>
    <property type="evidence" value="ECO:0007669"/>
    <property type="project" value="UniProtKB-UniRule"/>
</dbReference>
<dbReference type="CDD" id="cd02655">
    <property type="entry name" value="RNAP_beta'_C"/>
    <property type="match status" value="1"/>
</dbReference>
<dbReference type="CDD" id="cd01609">
    <property type="entry name" value="RNAP_beta'_N"/>
    <property type="match status" value="1"/>
</dbReference>
<dbReference type="FunFam" id="1.10.150.390:FF:000002">
    <property type="entry name" value="DNA-directed RNA polymerase subunit beta"/>
    <property type="match status" value="1"/>
</dbReference>
<dbReference type="FunFam" id="4.10.860.120:FF:000001">
    <property type="entry name" value="DNA-directed RNA polymerase subunit beta"/>
    <property type="match status" value="1"/>
</dbReference>
<dbReference type="Gene3D" id="1.10.132.30">
    <property type="match status" value="1"/>
</dbReference>
<dbReference type="Gene3D" id="1.10.150.390">
    <property type="match status" value="1"/>
</dbReference>
<dbReference type="Gene3D" id="1.10.1790.20">
    <property type="match status" value="1"/>
</dbReference>
<dbReference type="Gene3D" id="1.10.40.90">
    <property type="match status" value="1"/>
</dbReference>
<dbReference type="Gene3D" id="2.40.40.20">
    <property type="match status" value="1"/>
</dbReference>
<dbReference type="Gene3D" id="2.40.50.100">
    <property type="match status" value="1"/>
</dbReference>
<dbReference type="Gene3D" id="4.10.860.120">
    <property type="entry name" value="RNA polymerase II, clamp domain"/>
    <property type="match status" value="1"/>
</dbReference>
<dbReference type="Gene3D" id="1.10.274.100">
    <property type="entry name" value="RNA polymerase Rpb1, domain 3"/>
    <property type="match status" value="1"/>
</dbReference>
<dbReference type="HAMAP" id="MF_01322">
    <property type="entry name" value="RNApol_bact_RpoC"/>
    <property type="match status" value="1"/>
</dbReference>
<dbReference type="InterPro" id="IPR045867">
    <property type="entry name" value="DNA-dir_RpoC_beta_prime"/>
</dbReference>
<dbReference type="InterPro" id="IPR012754">
    <property type="entry name" value="DNA-dir_RpoC_beta_prime_bact"/>
</dbReference>
<dbReference type="InterPro" id="IPR000722">
    <property type="entry name" value="RNA_pol_asu"/>
</dbReference>
<dbReference type="InterPro" id="IPR006592">
    <property type="entry name" value="RNA_pol_N"/>
</dbReference>
<dbReference type="InterPro" id="IPR007080">
    <property type="entry name" value="RNA_pol_Rpb1_1"/>
</dbReference>
<dbReference type="InterPro" id="IPR007066">
    <property type="entry name" value="RNA_pol_Rpb1_3"/>
</dbReference>
<dbReference type="InterPro" id="IPR042102">
    <property type="entry name" value="RNA_pol_Rpb1_3_sf"/>
</dbReference>
<dbReference type="InterPro" id="IPR007083">
    <property type="entry name" value="RNA_pol_Rpb1_4"/>
</dbReference>
<dbReference type="InterPro" id="IPR007081">
    <property type="entry name" value="RNA_pol_Rpb1_5"/>
</dbReference>
<dbReference type="InterPro" id="IPR044893">
    <property type="entry name" value="RNA_pol_Rpb1_clamp_domain"/>
</dbReference>
<dbReference type="InterPro" id="IPR038120">
    <property type="entry name" value="Rpb1_funnel_sf"/>
</dbReference>
<dbReference type="NCBIfam" id="NF011498">
    <property type="entry name" value="PRK14906.1"/>
    <property type="match status" value="1"/>
</dbReference>
<dbReference type="NCBIfam" id="TIGR02386">
    <property type="entry name" value="rpoC_TIGR"/>
    <property type="match status" value="1"/>
</dbReference>
<dbReference type="PANTHER" id="PTHR19376">
    <property type="entry name" value="DNA-DIRECTED RNA POLYMERASE"/>
    <property type="match status" value="1"/>
</dbReference>
<dbReference type="PANTHER" id="PTHR19376:SF54">
    <property type="entry name" value="DNA-DIRECTED RNA POLYMERASE SUBUNIT BETA"/>
    <property type="match status" value="1"/>
</dbReference>
<dbReference type="Pfam" id="PF04997">
    <property type="entry name" value="RNA_pol_Rpb1_1"/>
    <property type="match status" value="1"/>
</dbReference>
<dbReference type="Pfam" id="PF00623">
    <property type="entry name" value="RNA_pol_Rpb1_2"/>
    <property type="match status" value="1"/>
</dbReference>
<dbReference type="Pfam" id="PF04983">
    <property type="entry name" value="RNA_pol_Rpb1_3"/>
    <property type="match status" value="1"/>
</dbReference>
<dbReference type="Pfam" id="PF05000">
    <property type="entry name" value="RNA_pol_Rpb1_4"/>
    <property type="match status" value="1"/>
</dbReference>
<dbReference type="Pfam" id="PF04998">
    <property type="entry name" value="RNA_pol_Rpb1_5"/>
    <property type="match status" value="1"/>
</dbReference>
<dbReference type="SMART" id="SM00663">
    <property type="entry name" value="RPOLA_N"/>
    <property type="match status" value="1"/>
</dbReference>
<dbReference type="SUPFAM" id="SSF64484">
    <property type="entry name" value="beta and beta-prime subunits of DNA dependent RNA-polymerase"/>
    <property type="match status" value="1"/>
</dbReference>
<feature type="chain" id="PRO_1000214492" description="DNA-directed RNA polymerase subunit beta'">
    <location>
        <begin position="1"/>
        <end position="1345"/>
    </location>
</feature>
<feature type="region of interest" description="Disordered" evidence="2">
    <location>
        <begin position="1325"/>
        <end position="1345"/>
    </location>
</feature>
<feature type="compositionally biased region" description="Basic and acidic residues" evidence="2">
    <location>
        <begin position="1335"/>
        <end position="1345"/>
    </location>
</feature>
<feature type="binding site" evidence="1">
    <location>
        <position position="60"/>
    </location>
    <ligand>
        <name>Zn(2+)</name>
        <dbReference type="ChEBI" id="CHEBI:29105"/>
        <label>1</label>
    </ligand>
</feature>
<feature type="binding site" evidence="1">
    <location>
        <position position="62"/>
    </location>
    <ligand>
        <name>Zn(2+)</name>
        <dbReference type="ChEBI" id="CHEBI:29105"/>
        <label>1</label>
    </ligand>
</feature>
<feature type="binding site" evidence="1">
    <location>
        <position position="75"/>
    </location>
    <ligand>
        <name>Zn(2+)</name>
        <dbReference type="ChEBI" id="CHEBI:29105"/>
        <label>1</label>
    </ligand>
</feature>
<feature type="binding site" evidence="1">
    <location>
        <position position="78"/>
    </location>
    <ligand>
        <name>Zn(2+)</name>
        <dbReference type="ChEBI" id="CHEBI:29105"/>
        <label>1</label>
    </ligand>
</feature>
<feature type="binding site" evidence="1">
    <location>
        <position position="536"/>
    </location>
    <ligand>
        <name>Mg(2+)</name>
        <dbReference type="ChEBI" id="CHEBI:18420"/>
    </ligand>
</feature>
<feature type="binding site" evidence="1">
    <location>
        <position position="538"/>
    </location>
    <ligand>
        <name>Mg(2+)</name>
        <dbReference type="ChEBI" id="CHEBI:18420"/>
    </ligand>
</feature>
<feature type="binding site" evidence="1">
    <location>
        <position position="540"/>
    </location>
    <ligand>
        <name>Mg(2+)</name>
        <dbReference type="ChEBI" id="CHEBI:18420"/>
    </ligand>
</feature>
<feature type="binding site" evidence="1">
    <location>
        <position position="895"/>
    </location>
    <ligand>
        <name>Zn(2+)</name>
        <dbReference type="ChEBI" id="CHEBI:29105"/>
        <label>2</label>
    </ligand>
</feature>
<feature type="binding site" evidence="1">
    <location>
        <position position="974"/>
    </location>
    <ligand>
        <name>Zn(2+)</name>
        <dbReference type="ChEBI" id="CHEBI:29105"/>
        <label>2</label>
    </ligand>
</feature>
<feature type="binding site" evidence="1">
    <location>
        <position position="981"/>
    </location>
    <ligand>
        <name>Zn(2+)</name>
        <dbReference type="ChEBI" id="CHEBI:29105"/>
        <label>2</label>
    </ligand>
</feature>
<feature type="binding site" evidence="1">
    <location>
        <position position="984"/>
    </location>
    <ligand>
        <name>Zn(2+)</name>
        <dbReference type="ChEBI" id="CHEBI:29105"/>
        <label>2</label>
    </ligand>
</feature>
<name>RPOC_BIFA0</name>
<sequence>MLDVNAFDKLKIGLATADDIRGWSYGEVKKPETINYRTLKPEKDGLFGEQIFGPTRDWECACGKYKRVRFKGIVCERCGVEVTRSRVRRERMGHIELAAPVTHIWFFKGVPSRLGYLLGIAPKELEKVIYFASYMVTSVDEEQRHQDLPDLQDEFDHEVQNLERRRNNEIEERAKKLEADLAELEADGEVKGSAKTKLRNGAERDMAAIRQRYDDQIKRIAAVFDKFKSLKPGDMESDVDLWREMEDRYGDYFEGCMGAEAIKKRLQDFDLEAAAKELREEIETGTGQRKARALKRLKVVNAFLTTDNKPEAMVLDVIPVIPPDLRPMVQLDGGRFATSDLNDLYRRVINRNNRLKRLIELGAPEIMLNNEKRMLQEAVDSLFDNGRRGRPVTGASNRPLKSLSDMLKGKQGRFRQNLLGKRVDYSGRSVIVVGPSLRMHQCGLPKPMALELFKPFVIKRLVDLNYAQNMKSAKRLVDRGDSEVWGVLEEVISEHPVLLNRAPTLHRLGIQAFEPILVEGKAIHLPPLACAAFNADFDGDQMAVHLPLSAEAQAEARSLMMASDNILKPADGHTVTMPSQDMILGLYYLSTVIDGAKGQGRIFSSLEEAQMALDKHEIDMQAKVLIRLPQDFVLPKDWEPGEVQVIDPEPGSPDVVKEERFADGSVLFATSLGRILFNDTLPVDYPFINEQAPKGKLSKIVDDIATRYSTQQVAATLDALKDLGFTRAPWSGVTMAFSDIVAPPDREEIIKGYEAQAAKVNNQYDLGLLTEEERRQELINLWTECTDKVAEAMRENFHDDNNVNIMVQSGARGNWMQIRQIAGMRGLVANPKGEIIPRPVKSNYREGLSVLEYFISQHGARKGLADTALRTAESGYLTRRLVDVSQEIIVREEDCGTTHGLPMTVAERDENGNLVLVKAADGGPYSRLLAQDVLDPADGKTVLYHAGDALSMDVLNDLVAHGVEQVIGRSVLTCESKRGVCAKCYGWSLATNKLVDVGEAVGIVAAQSIGEPGTQLTLRSFHSGGVASASDITQGLPRVTELFEARTPKGEAPISEFAGTIKVQDTERGREVILQPDDDSLEPITYQVTRRAPMLVKDGQHVDPGTQLVEGSVDPKKILRILGPRAAQMNIVNEVHDVYRSQGVDIHDKHIEVIVHQMLRRVTVIDSGDTDLLPGELVDRARFREQNKKTVAAGGRPAAGRPELMGITKASLATDSWLSAASFQETTRVLTEAALNEKEDDLKGLKENVIIGKLIPAGTGLARYRNATVEPDKAIRDTIYPNFGLGDGSLGGDLSDGDLGDVDFSNIDFGDLKLGDDFNPDDFLDDNDNPVDFGDEFRIDPDELK</sequence>
<keyword id="KW-0240">DNA-directed RNA polymerase</keyword>
<keyword id="KW-0460">Magnesium</keyword>
<keyword id="KW-0479">Metal-binding</keyword>
<keyword id="KW-0548">Nucleotidyltransferase</keyword>
<keyword id="KW-1185">Reference proteome</keyword>
<keyword id="KW-0804">Transcription</keyword>
<keyword id="KW-0808">Transferase</keyword>
<keyword id="KW-0862">Zinc</keyword>
<comment type="function">
    <text evidence="1">DNA-dependent RNA polymerase catalyzes the transcription of DNA into RNA using the four ribonucleoside triphosphates as substrates.</text>
</comment>
<comment type="catalytic activity">
    <reaction evidence="1">
        <text>RNA(n) + a ribonucleoside 5'-triphosphate = RNA(n+1) + diphosphate</text>
        <dbReference type="Rhea" id="RHEA:21248"/>
        <dbReference type="Rhea" id="RHEA-COMP:14527"/>
        <dbReference type="Rhea" id="RHEA-COMP:17342"/>
        <dbReference type="ChEBI" id="CHEBI:33019"/>
        <dbReference type="ChEBI" id="CHEBI:61557"/>
        <dbReference type="ChEBI" id="CHEBI:140395"/>
        <dbReference type="EC" id="2.7.7.6"/>
    </reaction>
</comment>
<comment type="cofactor">
    <cofactor evidence="1">
        <name>Mg(2+)</name>
        <dbReference type="ChEBI" id="CHEBI:18420"/>
    </cofactor>
    <text evidence="1">Binds 1 Mg(2+) ion per subunit.</text>
</comment>
<comment type="cofactor">
    <cofactor evidence="1">
        <name>Zn(2+)</name>
        <dbReference type="ChEBI" id="CHEBI:29105"/>
    </cofactor>
    <text evidence="1">Binds 2 Zn(2+) ions per subunit.</text>
</comment>
<comment type="subunit">
    <text evidence="1">The RNAP catalytic core consists of 2 alpha, 1 beta, 1 beta' and 1 omega subunit. When a sigma factor is associated with the core the holoenzyme is formed, which can initiate transcription.</text>
</comment>
<comment type="similarity">
    <text evidence="1">Belongs to the RNA polymerase beta' chain family.</text>
</comment>
<evidence type="ECO:0000255" key="1">
    <source>
        <dbReference type="HAMAP-Rule" id="MF_01322"/>
    </source>
</evidence>
<evidence type="ECO:0000256" key="2">
    <source>
        <dbReference type="SAM" id="MobiDB-lite"/>
    </source>
</evidence>
<gene>
    <name evidence="1" type="primary">rpoC</name>
    <name type="ordered locus">BLA_0547</name>
</gene>
<reference key="1">
    <citation type="journal article" date="2009" name="J. Bacteriol.">
        <title>Genome sequence of the probiotic bacterium Bifidobacterium animalis subsp. lactis AD011.</title>
        <authorList>
            <person name="Kim J.F."/>
            <person name="Jeong H."/>
            <person name="Yu D.S."/>
            <person name="Choi S.-H."/>
            <person name="Hur C.-G."/>
            <person name="Park M.-S."/>
            <person name="Yoon S.H."/>
            <person name="Kim D.-W."/>
            <person name="Ji G.E."/>
            <person name="Park H.-S."/>
            <person name="Oh T.K."/>
        </authorList>
    </citation>
    <scope>NUCLEOTIDE SEQUENCE [LARGE SCALE GENOMIC DNA]</scope>
    <source>
        <strain>AD011</strain>
    </source>
</reference>